<keyword id="KW-0227">DNA damage</keyword>
<keyword id="KW-0233">DNA recombination</keyword>
<keyword id="KW-0234">DNA repair</keyword>
<keyword id="KW-0539">Nucleus</keyword>
<protein>
    <recommendedName>
        <fullName>Suppressor of hydroxyurea sensitivity protein 2</fullName>
    </recommendedName>
</protein>
<accession>C8Z4Z5</accession>
<sequence length="223" mass="26137">MSKDVIEYSKLFAKLVNTNDDTKLDDTIASFLYYMFPRELFIRAISLLESSDMFIYILDRVHNKEGNEHTSLIDVLVDEFYKGSSNSLLEYRLIVKDTNDGAPPILVDIAHWFCSCEEFCKYFHEALEKTDEKEELHDVLINEVDDHLQFSDDRFAQLDPHSLSKQWYFKFDKICCSHLLAFSILLRSSINVLKFFTVNSNKVFVIAIDNIDEWLNLHINIVE</sequence>
<name>SHU2_YEAS8</name>
<reference key="1">
    <citation type="journal article" date="2009" name="Proc. Natl. Acad. Sci. U.S.A.">
        <title>Eukaryote-to-eukaryote gene transfer events revealed by the genome sequence of the wine yeast Saccharomyces cerevisiae EC1118.</title>
        <authorList>
            <person name="Novo M."/>
            <person name="Bigey F."/>
            <person name="Beyne E."/>
            <person name="Galeote V."/>
            <person name="Gavory F."/>
            <person name="Mallet S."/>
            <person name="Cambon B."/>
            <person name="Legras J.-L."/>
            <person name="Wincker P."/>
            <person name="Casaregola S."/>
            <person name="Dequin S."/>
        </authorList>
    </citation>
    <scope>NUCLEOTIDE SEQUENCE [LARGE SCALE GENOMIC DNA]</scope>
    <source>
        <strain>Lalvin EC1118 / Prise de mousse</strain>
    </source>
</reference>
<proteinExistence type="inferred from homology"/>
<feature type="chain" id="PRO_0000409740" description="Suppressor of hydroxyurea sensitivity protein 2">
    <location>
        <begin position="1"/>
        <end position="223"/>
    </location>
</feature>
<gene>
    <name type="primary">SHU2</name>
    <name type="ORF">EC1118_1D0_3257g</name>
</gene>
<comment type="function">
    <text evidence="1">Plays a role in a RAD51/RAD54-dependent homologous recombination repair (HRR) pathway to repair MMS-induced lesions during S-phase. Required for error-free repair of spontaneous and induced DNA lesions to protect the genome from mutation (By similarity).</text>
</comment>
<comment type="subunit">
    <text evidence="1">Component of the SHU complex composed of at least CSM2, PSY3, SHU1 and SHU2.</text>
</comment>
<comment type="subcellular location">
    <subcellularLocation>
        <location evidence="1">Nucleus</location>
    </subcellularLocation>
</comment>
<comment type="similarity">
    <text evidence="2">Belongs to the SHU2 family.</text>
</comment>
<organism>
    <name type="scientific">Saccharomyces cerevisiae (strain Lalvin EC1118 / Prise de mousse)</name>
    <name type="common">Baker's yeast</name>
    <dbReference type="NCBI Taxonomy" id="643680"/>
    <lineage>
        <taxon>Eukaryota</taxon>
        <taxon>Fungi</taxon>
        <taxon>Dikarya</taxon>
        <taxon>Ascomycota</taxon>
        <taxon>Saccharomycotina</taxon>
        <taxon>Saccharomycetes</taxon>
        <taxon>Saccharomycetales</taxon>
        <taxon>Saccharomycetaceae</taxon>
        <taxon>Saccharomyces</taxon>
    </lineage>
</organism>
<evidence type="ECO:0000250" key="1"/>
<evidence type="ECO:0000305" key="2"/>
<dbReference type="EMBL" id="FN393063">
    <property type="protein sequence ID" value="CAY78584.1"/>
    <property type="molecule type" value="Genomic_DNA"/>
</dbReference>
<dbReference type="SMR" id="C8Z4Z5"/>
<dbReference type="HOGENOM" id="CLU_1115918_0_0_1"/>
<dbReference type="OrthoDB" id="38539at4893"/>
<dbReference type="Proteomes" id="UP000000286">
    <property type="component" value="Chromosome IV, Scaffold EC1118_1D0"/>
</dbReference>
<dbReference type="GO" id="GO:0005634">
    <property type="term" value="C:nucleus"/>
    <property type="evidence" value="ECO:0007669"/>
    <property type="project" value="UniProtKB-SubCell"/>
</dbReference>
<dbReference type="GO" id="GO:0006310">
    <property type="term" value="P:DNA recombination"/>
    <property type="evidence" value="ECO:0007669"/>
    <property type="project" value="UniProtKB-KW"/>
</dbReference>
<dbReference type="GO" id="GO:0006281">
    <property type="term" value="P:DNA repair"/>
    <property type="evidence" value="ECO:0007669"/>
    <property type="project" value="UniProtKB-KW"/>
</dbReference>